<gene>
    <name evidence="7" type="primary">Rab11fip5</name>
    <name evidence="7" type="synonym">D6Ertd32e</name>
    <name evidence="7" type="synonym">GAF1</name>
    <name evidence="7" type="synonym">Rip11</name>
</gene>
<accession>Q8R361</accession>
<accession>C4IXU4</accession>
<dbReference type="EMBL" id="AC153605">
    <property type="status" value="NOT_ANNOTATED_CDS"/>
    <property type="molecule type" value="Genomic_DNA"/>
</dbReference>
<dbReference type="EMBL" id="AC155728">
    <property type="status" value="NOT_ANNOTATED_CDS"/>
    <property type="molecule type" value="Genomic_DNA"/>
</dbReference>
<dbReference type="EMBL" id="BC026473">
    <property type="protein sequence ID" value="AAH26473.1"/>
    <property type="molecule type" value="mRNA"/>
</dbReference>
<dbReference type="EMBL" id="BC044833">
    <property type="protein sequence ID" value="AAH44833.2"/>
    <property type="molecule type" value="mRNA"/>
</dbReference>
<dbReference type="EMBL" id="BC051063">
    <property type="protein sequence ID" value="AAH51063.3"/>
    <property type="molecule type" value="mRNA"/>
</dbReference>
<dbReference type="EMBL" id="BC141380">
    <property type="protein sequence ID" value="AAI41381.1"/>
    <property type="molecule type" value="mRNA"/>
</dbReference>
<dbReference type="CCDS" id="CCDS20292.1"/>
<dbReference type="RefSeq" id="NP_001003955.1">
    <property type="nucleotide sequence ID" value="NM_001003955.2"/>
</dbReference>
<dbReference type="RefSeq" id="NP_803417.3">
    <property type="nucleotide sequence ID" value="NM_177466.4"/>
</dbReference>
<dbReference type="SMR" id="Q8R361"/>
<dbReference type="BioGRID" id="206353">
    <property type="interactions" value="16"/>
</dbReference>
<dbReference type="FunCoup" id="Q8R361">
    <property type="interactions" value="1365"/>
</dbReference>
<dbReference type="IntAct" id="Q8R361">
    <property type="interactions" value="1"/>
</dbReference>
<dbReference type="STRING" id="10090.ENSMUSP00000145402"/>
<dbReference type="GlyGen" id="Q8R361">
    <property type="glycosylation" value="4 sites, 1 N-linked glycan (1 site), 1 O-linked glycan (3 sites)"/>
</dbReference>
<dbReference type="iPTMnet" id="Q8R361"/>
<dbReference type="PhosphoSitePlus" id="Q8R361"/>
<dbReference type="SwissPalm" id="Q8R361"/>
<dbReference type="jPOST" id="Q8R361"/>
<dbReference type="PaxDb" id="10090-ENSMUSP00000058305"/>
<dbReference type="PeptideAtlas" id="Q8R361"/>
<dbReference type="ProteomicsDB" id="254922"/>
<dbReference type="Pumba" id="Q8R361"/>
<dbReference type="Antibodypedia" id="31309">
    <property type="antibodies" value="123 antibodies from 26 providers"/>
</dbReference>
<dbReference type="DNASU" id="52055"/>
<dbReference type="Ensembl" id="ENSMUST00000060837.10">
    <property type="protein sequence ID" value="ENSMUSP00000058305.8"/>
    <property type="gene ID" value="ENSMUSG00000051343.12"/>
</dbReference>
<dbReference type="GeneID" id="52055"/>
<dbReference type="KEGG" id="mmu:52055"/>
<dbReference type="UCSC" id="uc009cpo.1">
    <property type="organism name" value="mouse"/>
</dbReference>
<dbReference type="AGR" id="MGI:1098586"/>
<dbReference type="CTD" id="26056"/>
<dbReference type="MGI" id="MGI:1098586">
    <property type="gene designation" value="Rab11fip5"/>
</dbReference>
<dbReference type="VEuPathDB" id="HostDB:ENSMUSG00000051343"/>
<dbReference type="eggNOG" id="ENOG502QQKU">
    <property type="taxonomic scope" value="Eukaryota"/>
</dbReference>
<dbReference type="GeneTree" id="ENSGT00940000158783"/>
<dbReference type="HOGENOM" id="CLU_015242_2_0_1"/>
<dbReference type="InParanoid" id="Q8R361"/>
<dbReference type="OrthoDB" id="8956628at2759"/>
<dbReference type="PhylomeDB" id="Q8R361"/>
<dbReference type="TreeFam" id="TF326172"/>
<dbReference type="BioGRID-ORCS" id="52055">
    <property type="hits" value="2 hits in 77 CRISPR screens"/>
</dbReference>
<dbReference type="CD-CODE" id="CE726F99">
    <property type="entry name" value="Postsynaptic density"/>
</dbReference>
<dbReference type="ChiTaRS" id="Rab11fip5">
    <property type="organism name" value="mouse"/>
</dbReference>
<dbReference type="PRO" id="PR:Q8R361"/>
<dbReference type="Proteomes" id="UP000000589">
    <property type="component" value="Chromosome 6"/>
</dbReference>
<dbReference type="RNAct" id="Q8R361">
    <property type="molecule type" value="protein"/>
</dbReference>
<dbReference type="Bgee" id="ENSMUSG00000051343">
    <property type="expression patterns" value="Expressed in spermatid and 64 other cell types or tissues"/>
</dbReference>
<dbReference type="ExpressionAtlas" id="Q8R361">
    <property type="expression patterns" value="baseline and differential"/>
</dbReference>
<dbReference type="GO" id="GO:0005769">
    <property type="term" value="C:early endosome"/>
    <property type="evidence" value="ECO:0000314"/>
    <property type="project" value="UniProtKB"/>
</dbReference>
<dbReference type="GO" id="GO:0031901">
    <property type="term" value="C:early endosome membrane"/>
    <property type="evidence" value="ECO:0007669"/>
    <property type="project" value="UniProtKB-SubCell"/>
</dbReference>
<dbReference type="GO" id="GO:0005794">
    <property type="term" value="C:Golgi apparatus"/>
    <property type="evidence" value="ECO:0000314"/>
    <property type="project" value="UniProtKB"/>
</dbReference>
<dbReference type="GO" id="GO:0000139">
    <property type="term" value="C:Golgi membrane"/>
    <property type="evidence" value="ECO:0007669"/>
    <property type="project" value="UniProtKB-SubCell"/>
</dbReference>
<dbReference type="GO" id="GO:0005741">
    <property type="term" value="C:mitochondrial outer membrane"/>
    <property type="evidence" value="ECO:0000250"/>
    <property type="project" value="UniProtKB"/>
</dbReference>
<dbReference type="GO" id="GO:0005739">
    <property type="term" value="C:mitochondrion"/>
    <property type="evidence" value="ECO:0007005"/>
    <property type="project" value="MGI"/>
</dbReference>
<dbReference type="GO" id="GO:0045335">
    <property type="term" value="C:phagocytic vesicle"/>
    <property type="evidence" value="ECO:0000314"/>
    <property type="project" value="MGI"/>
</dbReference>
<dbReference type="GO" id="GO:0098794">
    <property type="term" value="C:postsynapse"/>
    <property type="evidence" value="ECO:0007669"/>
    <property type="project" value="GOC"/>
</dbReference>
<dbReference type="GO" id="GO:0055037">
    <property type="term" value="C:recycling endosome"/>
    <property type="evidence" value="ECO:0000314"/>
    <property type="project" value="UniProtKB"/>
</dbReference>
<dbReference type="GO" id="GO:0055038">
    <property type="term" value="C:recycling endosome membrane"/>
    <property type="evidence" value="ECO:0007669"/>
    <property type="project" value="UniProtKB-SubCell"/>
</dbReference>
<dbReference type="GO" id="GO:0030141">
    <property type="term" value="C:secretory granule"/>
    <property type="evidence" value="ECO:0000314"/>
    <property type="project" value="UniProtKB"/>
</dbReference>
<dbReference type="GO" id="GO:0030658">
    <property type="term" value="C:transport vesicle membrane"/>
    <property type="evidence" value="ECO:0007669"/>
    <property type="project" value="UniProtKB-SubCell"/>
</dbReference>
<dbReference type="GO" id="GO:0043015">
    <property type="term" value="F:gamma-tubulin binding"/>
    <property type="evidence" value="ECO:0000250"/>
    <property type="project" value="UniProtKB"/>
</dbReference>
<dbReference type="GO" id="GO:0031267">
    <property type="term" value="F:small GTPase binding"/>
    <property type="evidence" value="ECO:0007669"/>
    <property type="project" value="InterPro"/>
</dbReference>
<dbReference type="GO" id="GO:0071346">
    <property type="term" value="P:cellular response to type II interferon"/>
    <property type="evidence" value="ECO:0000314"/>
    <property type="project" value="MGI"/>
</dbReference>
<dbReference type="GO" id="GO:0035773">
    <property type="term" value="P:insulin secretion involved in cellular response to glucose stimulus"/>
    <property type="evidence" value="ECO:0000315"/>
    <property type="project" value="UniProtKB"/>
</dbReference>
<dbReference type="GO" id="GO:0098884">
    <property type="term" value="P:postsynaptic neurotransmitter receptor internalization"/>
    <property type="evidence" value="ECO:0000314"/>
    <property type="project" value="SynGO"/>
</dbReference>
<dbReference type="GO" id="GO:0045055">
    <property type="term" value="P:regulated exocytosis"/>
    <property type="evidence" value="ECO:0000315"/>
    <property type="project" value="UniProtKB"/>
</dbReference>
<dbReference type="FunFam" id="2.60.40.150:FF:000077">
    <property type="entry name" value="rab11 family-interacting protein 1 isoform X1"/>
    <property type="match status" value="1"/>
</dbReference>
<dbReference type="FunFam" id="1.20.5.2440:FF:000004">
    <property type="entry name" value="rab11 family-interacting protein 5 isoform X2"/>
    <property type="match status" value="1"/>
</dbReference>
<dbReference type="Gene3D" id="1.20.5.2440">
    <property type="match status" value="1"/>
</dbReference>
<dbReference type="Gene3D" id="2.60.40.150">
    <property type="entry name" value="C2 domain"/>
    <property type="match status" value="1"/>
</dbReference>
<dbReference type="InterPro" id="IPR000008">
    <property type="entry name" value="C2_dom"/>
</dbReference>
<dbReference type="InterPro" id="IPR035892">
    <property type="entry name" value="C2_domain_sf"/>
</dbReference>
<dbReference type="InterPro" id="IPR037245">
    <property type="entry name" value="FIP-RBD_C_sf"/>
</dbReference>
<dbReference type="InterPro" id="IPR037789">
    <property type="entry name" value="FIP_classI"/>
</dbReference>
<dbReference type="InterPro" id="IPR019018">
    <property type="entry name" value="Rab-bd_FIP-RBD"/>
</dbReference>
<dbReference type="PANTHER" id="PTHR15746:SF14">
    <property type="entry name" value="RAB11 FAMILY-INTERACTING PROTEIN 5"/>
    <property type="match status" value="1"/>
</dbReference>
<dbReference type="PANTHER" id="PTHR15746">
    <property type="entry name" value="RAB11-RELATED"/>
    <property type="match status" value="1"/>
</dbReference>
<dbReference type="Pfam" id="PF00168">
    <property type="entry name" value="C2"/>
    <property type="match status" value="2"/>
</dbReference>
<dbReference type="Pfam" id="PF09457">
    <property type="entry name" value="RBD-FIP"/>
    <property type="match status" value="1"/>
</dbReference>
<dbReference type="SMART" id="SM00239">
    <property type="entry name" value="C2"/>
    <property type="match status" value="1"/>
</dbReference>
<dbReference type="SUPFAM" id="SSF49562">
    <property type="entry name" value="C2 domain (Calcium/lipid-binding domain, CaLB)"/>
    <property type="match status" value="1"/>
</dbReference>
<dbReference type="SUPFAM" id="SSF144270">
    <property type="entry name" value="Eferin C-derminal domain-like"/>
    <property type="match status" value="1"/>
</dbReference>
<dbReference type="PROSITE" id="PS50004">
    <property type="entry name" value="C2"/>
    <property type="match status" value="1"/>
</dbReference>
<dbReference type="PROSITE" id="PS51511">
    <property type="entry name" value="FIP_RBD"/>
    <property type="match status" value="1"/>
</dbReference>
<proteinExistence type="evidence at protein level"/>
<comment type="function">
    <text evidence="6">Rab effector involved in protein trafficking from apical recycling endosomes to the apical plasma membrane. Involved in insulin granule exocytosis. May regulate V-ATPase intracellular transport in response to extracellular acidosis.</text>
</comment>
<comment type="subunit">
    <text evidence="2">Interacts with RAB11FIP4 (By similarity). Interacts with NAPG (By similarity). Interacts with RO60 (By similarity). Interacts with RAB11A that has been activated by GTP binding (By similarity).</text>
</comment>
<comment type="subcellular location">
    <subcellularLocation>
        <location evidence="1">Cytoplasm</location>
    </subcellularLocation>
    <subcellularLocation>
        <location evidence="6">Recycling endosome membrane</location>
        <topology evidence="6">Peripheral membrane protein</topology>
    </subcellularLocation>
    <subcellularLocation>
        <location evidence="6">Early endosome membrane</location>
        <topology evidence="6">Peripheral membrane protein</topology>
    </subcellularLocation>
    <subcellularLocation>
        <location evidence="6">Golgi apparatus membrane</location>
        <topology evidence="6">Peripheral membrane protein</topology>
    </subcellularLocation>
    <subcellularLocation>
        <location evidence="6">Cytoplasmic vesicle</location>
        <location evidence="6">Secretory vesicle membrane</location>
        <topology evidence="6">Peripheral membrane protein</topology>
    </subcellularLocation>
    <subcellularLocation>
        <location evidence="1">Mitochondrion membrane</location>
        <topology evidence="1">Peripheral membrane protein</topology>
    </subcellularLocation>
</comment>
<comment type="domain">
    <text evidence="1">Binds to vesicles enriched in neutral phospholipids via its C2 domain. The interaction is favored by Mg(2+) rather than Ca(2+) (By similarity).</text>
</comment>
<comment type="PTM">
    <text evidence="6">Phosphorylated on serine and threonine residues. Phosphorylation at Ser-357 is PKA-dependent.</text>
</comment>
<protein>
    <recommendedName>
        <fullName evidence="7">Rab11 family-interacting protein 5</fullName>
        <shortName evidence="7">Rab11-FIP5</shortName>
    </recommendedName>
    <alternativeName>
        <fullName evidence="2">Rab11-interacting protein Rip11</fullName>
    </alternativeName>
</protein>
<sequence length="645" mass="69553">MALVRDPEPAAGSSRWLPTHVQVTVLRASGLRGKSSGAGSTSDAYTVIQVGREKYSTSVVEKTQGCPEWCEECSFELPPGALDGLLRAQEADAGPAPWASGPNAACELVLTTMHRSLIGVDKFLGRATVALDEVFRAGRAQHTQWYRLHSKPGKKEKERGEIQVTIQFTRNNLSASMFDLSMKDKPRSPFSKLKDRVKGKKKYDLESASAILPSSALEDPELGSLGKMGKAKGFFLRNKLRKSSLTQSNTSLGSDSTLSSTSGSLVYQGPGAELLTRSPSHSSWLSTEGGRDSIQSPKLLTHKRTYSDEASQLRAAPPRALLELQGHLDGASRSSLCVNGSHVYNEEPQPPLRHRSSISGPFPPSSSLHSVPPRSSEEGSRSSDDSWGRGSHGTSSSEAVPGQEELSKQAKGASCSGEEEGARLPEGKPVQVATPMVASSEAVAAEKDRKPRMGLFHHHHHQGLSRSEQGRRGSVGEKGSPSLGASPHHSSTGEEKAKSSWFGLRESKEPTQKPSPHPVKPLTAAPVEASPDRKQPRTSLSTALSSGLERLKTVTSGGIQSVLPASQLGSSVDTKRPKDSAVLDQSAKYYHLTHDELIGLLLQRERELSQRDEHVQELESYIDRLLVRIMETSPTLLQISPGPPK</sequence>
<keyword id="KW-0963">Cytoplasm</keyword>
<keyword id="KW-0968">Cytoplasmic vesicle</keyword>
<keyword id="KW-0903">Direct protein sequencing</keyword>
<keyword id="KW-0967">Endosome</keyword>
<keyword id="KW-0333">Golgi apparatus</keyword>
<keyword id="KW-0472">Membrane</keyword>
<keyword id="KW-0496">Mitochondrion</keyword>
<keyword id="KW-0597">Phosphoprotein</keyword>
<keyword id="KW-0653">Protein transport</keyword>
<keyword id="KW-1185">Reference proteome</keyword>
<keyword id="KW-0813">Transport</keyword>
<evidence type="ECO:0000250" key="1"/>
<evidence type="ECO:0000250" key="2">
    <source>
        <dbReference type="UniProtKB" id="Q9BXF6"/>
    </source>
</evidence>
<evidence type="ECO:0000255" key="3">
    <source>
        <dbReference type="PROSITE-ProRule" id="PRU00041"/>
    </source>
</evidence>
<evidence type="ECO:0000255" key="4">
    <source>
        <dbReference type="PROSITE-ProRule" id="PRU00844"/>
    </source>
</evidence>
<evidence type="ECO:0000256" key="5">
    <source>
        <dbReference type="SAM" id="MobiDB-lite"/>
    </source>
</evidence>
<evidence type="ECO:0000269" key="6">
    <source>
    </source>
</evidence>
<evidence type="ECO:0000312" key="7">
    <source>
        <dbReference type="MGI" id="MGI:1098586"/>
    </source>
</evidence>
<evidence type="ECO:0007744" key="8">
    <source>
    </source>
</evidence>
<evidence type="ECO:0007744" key="9">
    <source>
    </source>
</evidence>
<organism>
    <name type="scientific">Mus musculus</name>
    <name type="common">Mouse</name>
    <dbReference type="NCBI Taxonomy" id="10090"/>
    <lineage>
        <taxon>Eukaryota</taxon>
        <taxon>Metazoa</taxon>
        <taxon>Chordata</taxon>
        <taxon>Craniata</taxon>
        <taxon>Vertebrata</taxon>
        <taxon>Euteleostomi</taxon>
        <taxon>Mammalia</taxon>
        <taxon>Eutheria</taxon>
        <taxon>Euarchontoglires</taxon>
        <taxon>Glires</taxon>
        <taxon>Rodentia</taxon>
        <taxon>Myomorpha</taxon>
        <taxon>Muroidea</taxon>
        <taxon>Muridae</taxon>
        <taxon>Murinae</taxon>
        <taxon>Mus</taxon>
        <taxon>Mus</taxon>
    </lineage>
</organism>
<reference key="1">
    <citation type="journal article" date="2009" name="PLoS Biol.">
        <title>Lineage-specific biology revealed by a finished genome assembly of the mouse.</title>
        <authorList>
            <person name="Church D.M."/>
            <person name="Goodstadt L."/>
            <person name="Hillier L.W."/>
            <person name="Zody M.C."/>
            <person name="Goldstein S."/>
            <person name="She X."/>
            <person name="Bult C.J."/>
            <person name="Agarwala R."/>
            <person name="Cherry J.L."/>
            <person name="DiCuccio M."/>
            <person name="Hlavina W."/>
            <person name="Kapustin Y."/>
            <person name="Meric P."/>
            <person name="Maglott D."/>
            <person name="Birtle Z."/>
            <person name="Marques A.C."/>
            <person name="Graves T."/>
            <person name="Zhou S."/>
            <person name="Teague B."/>
            <person name="Potamousis K."/>
            <person name="Churas C."/>
            <person name="Place M."/>
            <person name="Herschleb J."/>
            <person name="Runnheim R."/>
            <person name="Forrest D."/>
            <person name="Amos-Landgraf J."/>
            <person name="Schwartz D.C."/>
            <person name="Cheng Z."/>
            <person name="Lindblad-Toh K."/>
            <person name="Eichler E.E."/>
            <person name="Ponting C.P."/>
        </authorList>
    </citation>
    <scope>NUCLEOTIDE SEQUENCE [LARGE SCALE GENOMIC DNA]</scope>
    <source>
        <strain>C57BL/6J</strain>
    </source>
</reference>
<reference key="2">
    <citation type="journal article" date="2004" name="Genome Res.">
        <title>The status, quality, and expansion of the NIH full-length cDNA project: the Mammalian Gene Collection (MGC).</title>
        <authorList>
            <consortium name="The MGC Project Team"/>
        </authorList>
    </citation>
    <scope>NUCLEOTIDE SEQUENCE [LARGE SCALE MRNA]</scope>
    <source>
        <strain>FVB/N</strain>
        <tissue>Brain</tissue>
        <tissue>Mammary tumor</tissue>
    </source>
</reference>
<reference key="3">
    <citation type="submission" date="2009-01" db="UniProtKB">
        <authorList>
            <person name="Lubec G."/>
            <person name="Sunyer B."/>
            <person name="Chen W.-Q."/>
        </authorList>
    </citation>
    <scope>PROTEIN SEQUENCE OF 382-389</scope>
    <scope>IDENTIFICATION BY MASS SPECTROMETRY</scope>
    <source>
        <strain>OF1</strain>
        <tissue>Hippocampus</tissue>
    </source>
</reference>
<reference key="4">
    <citation type="journal article" date="2009" name="Genes Cells">
        <title>Rab11 and its effector Rip11 participate in regulation of insulin granule exocytosis.</title>
        <authorList>
            <person name="Sugawara K."/>
            <person name="Shibasaki T."/>
            <person name="Mizoguchi A."/>
            <person name="Saito T."/>
            <person name="Seino S."/>
        </authorList>
    </citation>
    <scope>FUNCTION IN EXOCYTOSIS</scope>
    <scope>SUBCELLULAR LOCATION</scope>
    <scope>PHOSPHORYLATION AT SER-357</scope>
</reference>
<reference key="5">
    <citation type="journal article" date="2009" name="Immunity">
        <title>The phagosomal proteome in interferon-gamma-activated macrophages.</title>
        <authorList>
            <person name="Trost M."/>
            <person name="English L."/>
            <person name="Lemieux S."/>
            <person name="Courcelles M."/>
            <person name="Desjardins M."/>
            <person name="Thibault P."/>
        </authorList>
    </citation>
    <scope>PHOSPHORYLATION [LARGE SCALE ANALYSIS] AT SER-539; SER-545 AND SER-640</scope>
    <scope>IDENTIFICATION BY MASS SPECTROMETRY [LARGE SCALE ANALYSIS]</scope>
</reference>
<reference key="6">
    <citation type="journal article" date="2010" name="Cell">
        <title>A tissue-specific atlas of mouse protein phosphorylation and expression.</title>
        <authorList>
            <person name="Huttlin E.L."/>
            <person name="Jedrychowski M.P."/>
            <person name="Elias J.E."/>
            <person name="Goswami T."/>
            <person name="Rad R."/>
            <person name="Beausoleil S.A."/>
            <person name="Villen J."/>
            <person name="Haas W."/>
            <person name="Sowa M.E."/>
            <person name="Gygi S.P."/>
        </authorList>
    </citation>
    <scope>PHOSPHORYLATION [LARGE SCALE ANALYSIS] AT SER-176; SER-283; SER-307 AND SER-530</scope>
    <scope>IDENTIFICATION BY MASS SPECTROMETRY [LARGE SCALE ANALYSIS]</scope>
    <source>
        <tissue>Brain</tissue>
        <tissue>Brown adipose tissue</tissue>
        <tissue>Heart</tissue>
        <tissue>Kidney</tissue>
        <tissue>Lung</tissue>
        <tissue>Spleen</tissue>
        <tissue>Testis</tissue>
    </source>
</reference>
<name>RFIP5_MOUSE</name>
<feature type="chain" id="PRO_0000097308" description="Rab11 family-interacting protein 5">
    <location>
        <begin position="1"/>
        <end position="645"/>
    </location>
</feature>
<feature type="domain" description="C2" evidence="3">
    <location>
        <begin position="1"/>
        <end position="146"/>
    </location>
</feature>
<feature type="domain" description="FIP-RBD" evidence="4">
    <location>
        <begin position="578"/>
        <end position="640"/>
    </location>
</feature>
<feature type="region of interest" description="Disordered" evidence="5">
    <location>
        <begin position="271"/>
        <end position="299"/>
    </location>
</feature>
<feature type="region of interest" description="Disordered" evidence="5">
    <location>
        <begin position="341"/>
        <end position="550"/>
    </location>
</feature>
<feature type="compositionally biased region" description="Polar residues" evidence="5">
    <location>
        <begin position="277"/>
        <end position="286"/>
    </location>
</feature>
<feature type="compositionally biased region" description="Low complexity" evidence="5">
    <location>
        <begin position="357"/>
        <end position="374"/>
    </location>
</feature>
<feature type="compositionally biased region" description="Basic and acidic residues" evidence="5">
    <location>
        <begin position="375"/>
        <end position="387"/>
    </location>
</feature>
<feature type="compositionally biased region" description="Basic residues" evidence="5">
    <location>
        <begin position="452"/>
        <end position="463"/>
    </location>
</feature>
<feature type="modified residue" description="Phosphoserine" evidence="9">
    <location>
        <position position="176"/>
    </location>
</feature>
<feature type="modified residue" description="Phosphoserine" evidence="9">
    <location>
        <position position="283"/>
    </location>
</feature>
<feature type="modified residue" description="Phosphoserine" evidence="2">
    <location>
        <position position="286"/>
    </location>
</feature>
<feature type="modified residue" description="Phosphoserine" evidence="9">
    <location>
        <position position="307"/>
    </location>
</feature>
<feature type="modified residue" description="Phosphoserine" evidence="6">
    <location>
        <position position="357"/>
    </location>
</feature>
<feature type="modified residue" description="Phosphoserine" evidence="2">
    <location>
        <position position="367"/>
    </location>
</feature>
<feature type="modified residue" description="Phosphoserine" evidence="2">
    <location>
        <position position="391"/>
    </location>
</feature>
<feature type="modified residue" description="Phosphoserine" evidence="2">
    <location>
        <position position="395"/>
    </location>
</feature>
<feature type="modified residue" description="Phosphoserine" evidence="2">
    <location>
        <position position="486"/>
    </location>
</feature>
<feature type="modified residue" description="Phosphoserine" evidence="9">
    <location>
        <position position="530"/>
    </location>
</feature>
<feature type="modified residue" description="Phosphoserine" evidence="8">
    <location>
        <position position="539"/>
    </location>
</feature>
<feature type="modified residue" description="Phosphoserine" evidence="8">
    <location>
        <position position="545"/>
    </location>
</feature>
<feature type="modified residue" description="Phosphoserine" evidence="8">
    <location>
        <position position="640"/>
    </location>
</feature>